<name>BEST2_CAEEL</name>
<comment type="function">
    <text evidence="1">Forms chloride channels.</text>
</comment>
<comment type="subunit">
    <text evidence="1">Forms oligomers.</text>
</comment>
<comment type="subcellular location">
    <subcellularLocation>
        <location evidence="1">Cell membrane</location>
        <topology evidence="1">Multi-pass membrane protein</topology>
    </subcellularLocation>
</comment>
<comment type="similarity">
    <text evidence="3">Belongs to the anion channel-forming bestrophin (TC 1.A.46) family. Calcium-sensitive chloride channel subfamily.</text>
</comment>
<dbReference type="EMBL" id="Z73422">
    <property type="protein sequence ID" value="CAA97766.2"/>
    <property type="molecule type" value="Genomic_DNA"/>
</dbReference>
<dbReference type="PIR" id="T18782">
    <property type="entry name" value="T18782"/>
</dbReference>
<dbReference type="RefSeq" id="NP_502524.2">
    <property type="nucleotide sequence ID" value="NM_070123.3"/>
</dbReference>
<dbReference type="SMR" id="Q17529"/>
<dbReference type="FunCoup" id="Q17529">
    <property type="interactions" value="603"/>
</dbReference>
<dbReference type="STRING" id="6239.B0564.4.1"/>
<dbReference type="PaxDb" id="6239-B0564.4"/>
<dbReference type="EnsemblMetazoa" id="B0564.4.1">
    <property type="protein sequence ID" value="B0564.4.1"/>
    <property type="gene ID" value="WBGene00007204"/>
</dbReference>
<dbReference type="GeneID" id="182044"/>
<dbReference type="KEGG" id="cel:CELE_B0564.4"/>
<dbReference type="UCSC" id="B0564.4">
    <property type="organism name" value="c. elegans"/>
</dbReference>
<dbReference type="AGR" id="WB:WBGene00007204"/>
<dbReference type="CTD" id="182044"/>
<dbReference type="WormBase" id="B0564.4">
    <property type="protein sequence ID" value="CE43147"/>
    <property type="gene ID" value="WBGene00007204"/>
    <property type="gene designation" value="best-2"/>
</dbReference>
<dbReference type="eggNOG" id="KOG3547">
    <property type="taxonomic scope" value="Eukaryota"/>
</dbReference>
<dbReference type="GeneTree" id="ENSGT00970000196575"/>
<dbReference type="HOGENOM" id="CLU_018069_7_1_1"/>
<dbReference type="InParanoid" id="Q17529"/>
<dbReference type="OMA" id="NENERWK"/>
<dbReference type="OrthoDB" id="201595at2759"/>
<dbReference type="PhylomeDB" id="Q17529"/>
<dbReference type="PRO" id="PR:Q17529"/>
<dbReference type="Proteomes" id="UP000001940">
    <property type="component" value="Chromosome IV"/>
</dbReference>
<dbReference type="GO" id="GO:0034707">
    <property type="term" value="C:chloride channel complex"/>
    <property type="evidence" value="ECO:0007669"/>
    <property type="project" value="UniProtKB-KW"/>
</dbReference>
<dbReference type="GO" id="GO:0005886">
    <property type="term" value="C:plasma membrane"/>
    <property type="evidence" value="ECO:0007669"/>
    <property type="project" value="UniProtKB-SubCell"/>
</dbReference>
<dbReference type="GO" id="GO:0005254">
    <property type="term" value="F:chloride channel activity"/>
    <property type="evidence" value="ECO:0000318"/>
    <property type="project" value="GO_Central"/>
</dbReference>
<dbReference type="InterPro" id="IPR000615">
    <property type="entry name" value="Bestrophin"/>
</dbReference>
<dbReference type="InterPro" id="IPR021134">
    <property type="entry name" value="Bestrophin-like"/>
</dbReference>
<dbReference type="PANTHER" id="PTHR10736">
    <property type="entry name" value="BESTROPHIN"/>
    <property type="match status" value="1"/>
</dbReference>
<dbReference type="PANTHER" id="PTHR10736:SF9">
    <property type="entry name" value="BESTROPHIN HOMOLOG 1-RELATED"/>
    <property type="match status" value="1"/>
</dbReference>
<dbReference type="Pfam" id="PF01062">
    <property type="entry name" value="Bestrophin"/>
    <property type="match status" value="1"/>
</dbReference>
<organism>
    <name type="scientific">Caenorhabditis elegans</name>
    <dbReference type="NCBI Taxonomy" id="6239"/>
    <lineage>
        <taxon>Eukaryota</taxon>
        <taxon>Metazoa</taxon>
        <taxon>Ecdysozoa</taxon>
        <taxon>Nematoda</taxon>
        <taxon>Chromadorea</taxon>
        <taxon>Rhabditida</taxon>
        <taxon>Rhabditina</taxon>
        <taxon>Rhabditomorpha</taxon>
        <taxon>Rhabditoidea</taxon>
        <taxon>Rhabditidae</taxon>
        <taxon>Peloderinae</taxon>
        <taxon>Caenorhabditis</taxon>
    </lineage>
</organism>
<proteinExistence type="inferred from homology"/>
<evidence type="ECO:0000250" key="1"/>
<evidence type="ECO:0000255" key="2"/>
<evidence type="ECO:0000305" key="3"/>
<accession>Q17529</accession>
<sequence length="421" mass="49985">MTINYHKEIKTSHTWKFFVLLFRWKGSIWKAIYMETIIFLICYGIISVVYRTAMSEPSQRTFESVIRYCDKRLSFIPLEFVLGFFVTIVVDRWTKLWRTVGFIDDVCLLANLYVRGTSEKAIIYRRNIARYCALTQLLVFRDVSMRTRRRFPTMETVVAAGFMSKDELDLYNSYTTKNNSRLGKKYWIPANWALCMTYKARKDGYIESDYFKAQMEGEIRTWRTNIEWVCNYDWVPLPLMYPQLVCLAVNLYFLVSIIARQLVIEKHKMVDEVDVYFPVMTFLQFIFYMGWLKVIEVMLNPFGEDDDDFETNALIDRNITMGLKMVDNTMKTPELLKDQFFDEVLVSLLYSEESSQISNYHYHGSTSEVHLEQKCSSVRMIPHSQSEYTLKHMRKQTLSRSVLPDVNENERWKIPTSLEKF</sequence>
<feature type="chain" id="PRO_0000143125" description="Bestrophin homolog 2">
    <location>
        <begin position="1"/>
        <end position="421"/>
    </location>
</feature>
<feature type="transmembrane region" description="Helical" evidence="2">
    <location>
        <begin position="28"/>
        <end position="48"/>
    </location>
</feature>
<feature type="transmembrane region" description="Helical" evidence="2">
    <location>
        <begin position="73"/>
        <end position="93"/>
    </location>
</feature>
<feature type="transmembrane region" description="Helical" evidence="2">
    <location>
        <begin position="239"/>
        <end position="259"/>
    </location>
</feature>
<feature type="transmembrane region" description="Helical" evidence="2">
    <location>
        <begin position="275"/>
        <end position="295"/>
    </location>
</feature>
<gene>
    <name type="primary">best-2</name>
    <name type="ORF">B0564.4</name>
</gene>
<protein>
    <recommendedName>
        <fullName>Bestrophin homolog 2</fullName>
    </recommendedName>
</protein>
<reference key="1">
    <citation type="journal article" date="1998" name="Science">
        <title>Genome sequence of the nematode C. elegans: a platform for investigating biology.</title>
        <authorList>
            <consortium name="The C. elegans sequencing consortium"/>
        </authorList>
    </citation>
    <scope>NUCLEOTIDE SEQUENCE [LARGE SCALE GENOMIC DNA]</scope>
    <source>
        <strain>Bristol N2</strain>
    </source>
</reference>
<keyword id="KW-1003">Cell membrane</keyword>
<keyword id="KW-0868">Chloride</keyword>
<keyword id="KW-0869">Chloride channel</keyword>
<keyword id="KW-0407">Ion channel</keyword>
<keyword id="KW-0406">Ion transport</keyword>
<keyword id="KW-0472">Membrane</keyword>
<keyword id="KW-1185">Reference proteome</keyword>
<keyword id="KW-0812">Transmembrane</keyword>
<keyword id="KW-1133">Transmembrane helix</keyword>
<keyword id="KW-0813">Transport</keyword>